<reference key="1">
    <citation type="journal article" date="2003" name="J. Bacteriol.">
        <title>Complete genome sequence of the oral pathogenic bacterium Porphyromonas gingivalis strain W83.</title>
        <authorList>
            <person name="Nelson K.E."/>
            <person name="Fleischmann R.D."/>
            <person name="DeBoy R.T."/>
            <person name="Paulsen I.T."/>
            <person name="Fouts D.E."/>
            <person name="Eisen J.A."/>
            <person name="Daugherty S.C."/>
            <person name="Dodson R.J."/>
            <person name="Durkin A.S."/>
            <person name="Gwinn M.L."/>
            <person name="Haft D.H."/>
            <person name="Kolonay J.F."/>
            <person name="Nelson W.C."/>
            <person name="Mason T.M."/>
            <person name="Tallon L."/>
            <person name="Gray J."/>
            <person name="Granger D."/>
            <person name="Tettelin H."/>
            <person name="Dong H."/>
            <person name="Galvin J.L."/>
            <person name="Duncan M.J."/>
            <person name="Dewhirst F.E."/>
            <person name="Fraser C.M."/>
        </authorList>
    </citation>
    <scope>NUCLEOTIDE SEQUENCE [LARGE SCALE GENOMIC DNA]</scope>
    <source>
        <strain>ATCC BAA-308 / W83</strain>
    </source>
</reference>
<keyword id="KW-0963">Cytoplasm</keyword>
<keyword id="KW-0369">Histidine metabolism</keyword>
<keyword id="KW-0378">Hydrolase</keyword>
<keyword id="KW-0408">Iron</keyword>
<keyword id="KW-0479">Metal-binding</keyword>
<keyword id="KW-1185">Reference proteome</keyword>
<keyword id="KW-0862">Zinc</keyword>
<accession>Q7MX82</accession>
<comment type="function">
    <text evidence="1">Catalyzes the hydrolytic cleavage of the carbon-nitrogen bond in imidazolone-5-propanoate to yield N-formimidoyl-L-glutamate. It is the third step in the universal histidine degradation pathway.</text>
</comment>
<comment type="catalytic activity">
    <reaction evidence="1">
        <text>4-imidazolone-5-propanoate + H2O = N-formimidoyl-L-glutamate</text>
        <dbReference type="Rhea" id="RHEA:23660"/>
        <dbReference type="ChEBI" id="CHEBI:15377"/>
        <dbReference type="ChEBI" id="CHEBI:58928"/>
        <dbReference type="ChEBI" id="CHEBI:77893"/>
        <dbReference type="EC" id="3.5.2.7"/>
    </reaction>
</comment>
<comment type="cofactor">
    <cofactor evidence="1">
        <name>Zn(2+)</name>
        <dbReference type="ChEBI" id="CHEBI:29105"/>
    </cofactor>
    <cofactor evidence="1">
        <name>Fe(3+)</name>
        <dbReference type="ChEBI" id="CHEBI:29034"/>
    </cofactor>
    <text evidence="1">Binds 1 zinc or iron ion per subunit.</text>
</comment>
<comment type="pathway">
    <text evidence="1">Amino-acid degradation; L-histidine degradation into L-glutamate; N-formimidoyl-L-glutamate from L-histidine: step 3/3.</text>
</comment>
<comment type="subcellular location">
    <subcellularLocation>
        <location evidence="1">Cytoplasm</location>
    </subcellularLocation>
</comment>
<comment type="similarity">
    <text evidence="1">Belongs to the metallo-dependent hydrolases superfamily. HutI family.</text>
</comment>
<dbReference type="EC" id="3.5.2.7" evidence="1"/>
<dbReference type="EMBL" id="AE015924">
    <property type="protein sequence ID" value="AAQ65542.1"/>
    <property type="molecule type" value="Genomic_DNA"/>
</dbReference>
<dbReference type="RefSeq" id="WP_010955979.1">
    <property type="nucleotide sequence ID" value="NC_002950.2"/>
</dbReference>
<dbReference type="SMR" id="Q7MX82"/>
<dbReference type="STRING" id="242619.PG_0328"/>
<dbReference type="EnsemblBacteria" id="AAQ65542">
    <property type="protein sequence ID" value="AAQ65542"/>
    <property type="gene ID" value="PG_0328"/>
</dbReference>
<dbReference type="KEGG" id="pgi:PG_0328"/>
<dbReference type="PATRIC" id="fig|242619.8.peg.303"/>
<dbReference type="eggNOG" id="COG1228">
    <property type="taxonomic scope" value="Bacteria"/>
</dbReference>
<dbReference type="HOGENOM" id="CLU_041647_0_1_10"/>
<dbReference type="BioCyc" id="PGIN242619:G1G02-309-MONOMER"/>
<dbReference type="UniPathway" id="UPA00379">
    <property type="reaction ID" value="UER00551"/>
</dbReference>
<dbReference type="Proteomes" id="UP000000588">
    <property type="component" value="Chromosome"/>
</dbReference>
<dbReference type="GO" id="GO:0005737">
    <property type="term" value="C:cytoplasm"/>
    <property type="evidence" value="ECO:0007669"/>
    <property type="project" value="UniProtKB-SubCell"/>
</dbReference>
<dbReference type="GO" id="GO:0050480">
    <property type="term" value="F:imidazolonepropionase activity"/>
    <property type="evidence" value="ECO:0007669"/>
    <property type="project" value="UniProtKB-UniRule"/>
</dbReference>
<dbReference type="GO" id="GO:0005506">
    <property type="term" value="F:iron ion binding"/>
    <property type="evidence" value="ECO:0007669"/>
    <property type="project" value="UniProtKB-UniRule"/>
</dbReference>
<dbReference type="GO" id="GO:0008270">
    <property type="term" value="F:zinc ion binding"/>
    <property type="evidence" value="ECO:0007669"/>
    <property type="project" value="UniProtKB-UniRule"/>
</dbReference>
<dbReference type="GO" id="GO:0019556">
    <property type="term" value="P:L-histidine catabolic process to glutamate and formamide"/>
    <property type="evidence" value="ECO:0007669"/>
    <property type="project" value="UniProtKB-UniPathway"/>
</dbReference>
<dbReference type="GO" id="GO:0019557">
    <property type="term" value="P:L-histidine catabolic process to glutamate and formate"/>
    <property type="evidence" value="ECO:0007669"/>
    <property type="project" value="UniProtKB-UniPathway"/>
</dbReference>
<dbReference type="CDD" id="cd01296">
    <property type="entry name" value="Imidazolone-5PH"/>
    <property type="match status" value="1"/>
</dbReference>
<dbReference type="FunFam" id="3.20.20.140:FF:000007">
    <property type="entry name" value="Imidazolonepropionase"/>
    <property type="match status" value="1"/>
</dbReference>
<dbReference type="Gene3D" id="3.20.20.140">
    <property type="entry name" value="Metal-dependent hydrolases"/>
    <property type="match status" value="1"/>
</dbReference>
<dbReference type="Gene3D" id="2.30.40.10">
    <property type="entry name" value="Urease, subunit C, domain 1"/>
    <property type="match status" value="1"/>
</dbReference>
<dbReference type="HAMAP" id="MF_00372">
    <property type="entry name" value="HutI"/>
    <property type="match status" value="1"/>
</dbReference>
<dbReference type="InterPro" id="IPR006680">
    <property type="entry name" value="Amidohydro-rel"/>
</dbReference>
<dbReference type="InterPro" id="IPR005920">
    <property type="entry name" value="HutI"/>
</dbReference>
<dbReference type="InterPro" id="IPR011059">
    <property type="entry name" value="Metal-dep_hydrolase_composite"/>
</dbReference>
<dbReference type="InterPro" id="IPR032466">
    <property type="entry name" value="Metal_Hydrolase"/>
</dbReference>
<dbReference type="NCBIfam" id="TIGR01224">
    <property type="entry name" value="hutI"/>
    <property type="match status" value="1"/>
</dbReference>
<dbReference type="PANTHER" id="PTHR42752">
    <property type="entry name" value="IMIDAZOLONEPROPIONASE"/>
    <property type="match status" value="1"/>
</dbReference>
<dbReference type="PANTHER" id="PTHR42752:SF1">
    <property type="entry name" value="IMIDAZOLONEPROPIONASE-RELATED"/>
    <property type="match status" value="1"/>
</dbReference>
<dbReference type="Pfam" id="PF01979">
    <property type="entry name" value="Amidohydro_1"/>
    <property type="match status" value="1"/>
</dbReference>
<dbReference type="SUPFAM" id="SSF51338">
    <property type="entry name" value="Composite domain of metallo-dependent hydrolases"/>
    <property type="match status" value="1"/>
</dbReference>
<dbReference type="SUPFAM" id="SSF51556">
    <property type="entry name" value="Metallo-dependent hydrolases"/>
    <property type="match status" value="1"/>
</dbReference>
<feature type="chain" id="PRO_0000306482" description="Imidazolonepropionase">
    <location>
        <begin position="1"/>
        <end position="423"/>
    </location>
</feature>
<feature type="binding site" evidence="1">
    <location>
        <position position="87"/>
    </location>
    <ligand>
        <name>Fe(3+)</name>
        <dbReference type="ChEBI" id="CHEBI:29034"/>
    </ligand>
</feature>
<feature type="binding site" evidence="1">
    <location>
        <position position="87"/>
    </location>
    <ligand>
        <name>Zn(2+)</name>
        <dbReference type="ChEBI" id="CHEBI:29105"/>
    </ligand>
</feature>
<feature type="binding site" evidence="1">
    <location>
        <position position="89"/>
    </location>
    <ligand>
        <name>Fe(3+)</name>
        <dbReference type="ChEBI" id="CHEBI:29034"/>
    </ligand>
</feature>
<feature type="binding site" evidence="1">
    <location>
        <position position="89"/>
    </location>
    <ligand>
        <name>Zn(2+)</name>
        <dbReference type="ChEBI" id="CHEBI:29105"/>
    </ligand>
</feature>
<feature type="binding site" evidence="1">
    <location>
        <position position="96"/>
    </location>
    <ligand>
        <name>4-imidazolone-5-propanoate</name>
        <dbReference type="ChEBI" id="CHEBI:77893"/>
    </ligand>
</feature>
<feature type="binding site" evidence="1">
    <location>
        <position position="159"/>
    </location>
    <ligand>
        <name>4-imidazolone-5-propanoate</name>
        <dbReference type="ChEBI" id="CHEBI:77893"/>
    </ligand>
</feature>
<feature type="binding site" evidence="1">
    <location>
        <position position="159"/>
    </location>
    <ligand>
        <name>N-formimidoyl-L-glutamate</name>
        <dbReference type="ChEBI" id="CHEBI:58928"/>
    </ligand>
</feature>
<feature type="binding site" evidence="1">
    <location>
        <position position="192"/>
    </location>
    <ligand>
        <name>4-imidazolone-5-propanoate</name>
        <dbReference type="ChEBI" id="CHEBI:77893"/>
    </ligand>
</feature>
<feature type="binding site" evidence="1">
    <location>
        <position position="257"/>
    </location>
    <ligand>
        <name>Fe(3+)</name>
        <dbReference type="ChEBI" id="CHEBI:29034"/>
    </ligand>
</feature>
<feature type="binding site" evidence="1">
    <location>
        <position position="257"/>
    </location>
    <ligand>
        <name>Zn(2+)</name>
        <dbReference type="ChEBI" id="CHEBI:29105"/>
    </ligand>
</feature>
<feature type="binding site" evidence="1">
    <location>
        <position position="260"/>
    </location>
    <ligand>
        <name>4-imidazolone-5-propanoate</name>
        <dbReference type="ChEBI" id="CHEBI:77893"/>
    </ligand>
</feature>
<feature type="binding site" evidence="1">
    <location>
        <position position="331"/>
    </location>
    <ligand>
        <name>Fe(3+)</name>
        <dbReference type="ChEBI" id="CHEBI:29034"/>
    </ligand>
</feature>
<feature type="binding site" evidence="1">
    <location>
        <position position="331"/>
    </location>
    <ligand>
        <name>Zn(2+)</name>
        <dbReference type="ChEBI" id="CHEBI:29105"/>
    </ligand>
</feature>
<feature type="binding site" evidence="1">
    <location>
        <position position="333"/>
    </location>
    <ligand>
        <name>N-formimidoyl-L-glutamate</name>
        <dbReference type="ChEBI" id="CHEBI:58928"/>
    </ligand>
</feature>
<feature type="binding site" evidence="1">
    <location>
        <position position="335"/>
    </location>
    <ligand>
        <name>N-formimidoyl-L-glutamate</name>
        <dbReference type="ChEBI" id="CHEBI:58928"/>
    </ligand>
</feature>
<feature type="binding site" evidence="1">
    <location>
        <position position="336"/>
    </location>
    <ligand>
        <name>4-imidazolone-5-propanoate</name>
        <dbReference type="ChEBI" id="CHEBI:77893"/>
    </ligand>
</feature>
<proteinExistence type="inferred from homology"/>
<evidence type="ECO:0000255" key="1">
    <source>
        <dbReference type="HAMAP-Rule" id="MF_00372"/>
    </source>
</evidence>
<organism>
    <name type="scientific">Porphyromonas gingivalis (strain ATCC BAA-308 / W83)</name>
    <dbReference type="NCBI Taxonomy" id="242619"/>
    <lineage>
        <taxon>Bacteria</taxon>
        <taxon>Pseudomonadati</taxon>
        <taxon>Bacteroidota</taxon>
        <taxon>Bacteroidia</taxon>
        <taxon>Bacteroidales</taxon>
        <taxon>Porphyromonadaceae</taxon>
        <taxon>Porphyromonas</taxon>
    </lineage>
</organism>
<protein>
    <recommendedName>
        <fullName evidence="1">Imidazolonepropionase</fullName>
        <ecNumber evidence="1">3.5.2.7</ecNumber>
    </recommendedName>
    <alternativeName>
        <fullName evidence="1">Imidazolone-5-propionate hydrolase</fullName>
    </alternativeName>
</protein>
<name>HUTI_PORGI</name>
<gene>
    <name evidence="1" type="primary">hutI</name>
    <name type="ordered locus">PG_0328</name>
</gene>
<sequence length="423" mass="45881">MPNTPHTMNLYIKNIAQLVTCQGSEAKHGREAMGQIHTIEGPAAVVIRDGIIAFAGRMADVAPSMTEGCRELDATGRCVLPGFVDSHTHLVFGGYREDEFQWRLAGDSYMSIMERGGGIASTMRATRSESEDELKASARRHLSNMMKMGVTTVEAKSGYGMNLETELKQLRVVRDLQDEQPLDLYSTFMGAHDTAPEYKGRPTEFIEYLCREVLPEVVRQNLAECCDIFTEKGVFDHEQTRRMLTAAKEAGLSVKMHADEIVPFGGAELAAELGCLSADHLLRISDAGIKALAESNTVATLLPCTAFSLRADYAPARKMIDAGCAVALGSDLNPGSCFSASVPLMFALATLYMGMTVEEAITALTINGAAAIGRADTIGSIEPGKKGDLVVLQYPSYKFLSYHFGMNLVEHTVKGGRVVYTNS</sequence>